<sequence>MKPSMRSRLEQLAHRLIEVDALLAEPETAADMDRFRKLSRERAELEPVVEAFNAFLGVEADVATAQEMLSDPDMKAMAEDEIKTGRARIEEMEAALQLLLLPRDPDDGRSLFLEIRAGTGGDESALFSGDLLRMYTRYAETRGWRVEIMSESESELGGYKEVIVRIDGDGAYGRLKFESGAHRVQRVPATEAQGRIHTSACTVAVMPEADAMSDIVINPSDLRIDTFRASGAGGQHINKTDSAVRITHVPTGLVVECQDDRSQHRNKDKAMQVLAARLKDKEMRERQSKEAAERKSLIGSGDRSERIRTYNYPQGRVTDHRINLTLYKLQQIMEGDLDELTGALLAEHQAEQLAALGHDL</sequence>
<organism>
    <name type="scientific">Bordetella parapertussis (strain 12822 / ATCC BAA-587 / NCTC 13253)</name>
    <dbReference type="NCBI Taxonomy" id="257311"/>
    <lineage>
        <taxon>Bacteria</taxon>
        <taxon>Pseudomonadati</taxon>
        <taxon>Pseudomonadota</taxon>
        <taxon>Betaproteobacteria</taxon>
        <taxon>Burkholderiales</taxon>
        <taxon>Alcaligenaceae</taxon>
        <taxon>Bordetella</taxon>
    </lineage>
</organism>
<dbReference type="EMBL" id="BX640424">
    <property type="protein sequence ID" value="CAE35966.1"/>
    <property type="molecule type" value="Genomic_DNA"/>
</dbReference>
<dbReference type="RefSeq" id="WP_010927442.1">
    <property type="nucleotide sequence ID" value="NC_002928.3"/>
</dbReference>
<dbReference type="SMR" id="Q7WCE3"/>
<dbReference type="GeneID" id="93206616"/>
<dbReference type="KEGG" id="bpa:BPP0382"/>
<dbReference type="HOGENOM" id="CLU_036856_0_1_4"/>
<dbReference type="Proteomes" id="UP000001421">
    <property type="component" value="Chromosome"/>
</dbReference>
<dbReference type="GO" id="GO:0005737">
    <property type="term" value="C:cytoplasm"/>
    <property type="evidence" value="ECO:0007669"/>
    <property type="project" value="UniProtKB-SubCell"/>
</dbReference>
<dbReference type="GO" id="GO:0016149">
    <property type="term" value="F:translation release factor activity, codon specific"/>
    <property type="evidence" value="ECO:0007669"/>
    <property type="project" value="UniProtKB-UniRule"/>
</dbReference>
<dbReference type="FunFam" id="3.30.160.20:FF:000004">
    <property type="entry name" value="Peptide chain release factor 1"/>
    <property type="match status" value="1"/>
</dbReference>
<dbReference type="FunFam" id="3.30.70.1660:FF:000002">
    <property type="entry name" value="Peptide chain release factor 1"/>
    <property type="match status" value="1"/>
</dbReference>
<dbReference type="FunFam" id="3.30.70.1660:FF:000004">
    <property type="entry name" value="Peptide chain release factor 1"/>
    <property type="match status" value="1"/>
</dbReference>
<dbReference type="Gene3D" id="3.30.160.20">
    <property type="match status" value="1"/>
</dbReference>
<dbReference type="Gene3D" id="3.30.70.1660">
    <property type="match status" value="2"/>
</dbReference>
<dbReference type="Gene3D" id="6.10.140.1950">
    <property type="match status" value="1"/>
</dbReference>
<dbReference type="HAMAP" id="MF_00093">
    <property type="entry name" value="Rel_fac_1"/>
    <property type="match status" value="1"/>
</dbReference>
<dbReference type="InterPro" id="IPR005139">
    <property type="entry name" value="PCRF"/>
</dbReference>
<dbReference type="InterPro" id="IPR000352">
    <property type="entry name" value="Pep_chain_release_fac_I"/>
</dbReference>
<dbReference type="InterPro" id="IPR045853">
    <property type="entry name" value="Pep_chain_release_fac_I_sf"/>
</dbReference>
<dbReference type="InterPro" id="IPR050057">
    <property type="entry name" value="Prokaryotic/Mito_RF"/>
</dbReference>
<dbReference type="InterPro" id="IPR004373">
    <property type="entry name" value="RF-1"/>
</dbReference>
<dbReference type="NCBIfam" id="TIGR00019">
    <property type="entry name" value="prfA"/>
    <property type="match status" value="1"/>
</dbReference>
<dbReference type="NCBIfam" id="NF001859">
    <property type="entry name" value="PRK00591.1"/>
    <property type="match status" value="1"/>
</dbReference>
<dbReference type="PANTHER" id="PTHR43804">
    <property type="entry name" value="LD18447P"/>
    <property type="match status" value="1"/>
</dbReference>
<dbReference type="PANTHER" id="PTHR43804:SF7">
    <property type="entry name" value="LD18447P"/>
    <property type="match status" value="1"/>
</dbReference>
<dbReference type="Pfam" id="PF03462">
    <property type="entry name" value="PCRF"/>
    <property type="match status" value="1"/>
</dbReference>
<dbReference type="Pfam" id="PF00472">
    <property type="entry name" value="RF-1"/>
    <property type="match status" value="1"/>
</dbReference>
<dbReference type="SMART" id="SM00937">
    <property type="entry name" value="PCRF"/>
    <property type="match status" value="1"/>
</dbReference>
<dbReference type="SUPFAM" id="SSF75620">
    <property type="entry name" value="Release factor"/>
    <property type="match status" value="1"/>
</dbReference>
<dbReference type="PROSITE" id="PS00745">
    <property type="entry name" value="RF_PROK_I"/>
    <property type="match status" value="1"/>
</dbReference>
<evidence type="ECO:0000255" key="1">
    <source>
        <dbReference type="HAMAP-Rule" id="MF_00093"/>
    </source>
</evidence>
<keyword id="KW-0963">Cytoplasm</keyword>
<keyword id="KW-0488">Methylation</keyword>
<keyword id="KW-0648">Protein biosynthesis</keyword>
<comment type="function">
    <text evidence="1">Peptide chain release factor 1 directs the termination of translation in response to the peptide chain termination codons UAG and UAA.</text>
</comment>
<comment type="subcellular location">
    <subcellularLocation>
        <location evidence="1">Cytoplasm</location>
    </subcellularLocation>
</comment>
<comment type="PTM">
    <text evidence="1">Methylated by PrmC. Methylation increases the termination efficiency of RF1.</text>
</comment>
<comment type="similarity">
    <text evidence="1">Belongs to the prokaryotic/mitochondrial release factor family.</text>
</comment>
<name>RF1_BORPA</name>
<reference key="1">
    <citation type="journal article" date="2003" name="Nat. Genet.">
        <title>Comparative analysis of the genome sequences of Bordetella pertussis, Bordetella parapertussis and Bordetella bronchiseptica.</title>
        <authorList>
            <person name="Parkhill J."/>
            <person name="Sebaihia M."/>
            <person name="Preston A."/>
            <person name="Murphy L.D."/>
            <person name="Thomson N.R."/>
            <person name="Harris D.E."/>
            <person name="Holden M.T.G."/>
            <person name="Churcher C.M."/>
            <person name="Bentley S.D."/>
            <person name="Mungall K.L."/>
            <person name="Cerdeno-Tarraga A.-M."/>
            <person name="Temple L."/>
            <person name="James K.D."/>
            <person name="Harris B."/>
            <person name="Quail M.A."/>
            <person name="Achtman M."/>
            <person name="Atkin R."/>
            <person name="Baker S."/>
            <person name="Basham D."/>
            <person name="Bason N."/>
            <person name="Cherevach I."/>
            <person name="Chillingworth T."/>
            <person name="Collins M."/>
            <person name="Cronin A."/>
            <person name="Davis P."/>
            <person name="Doggett J."/>
            <person name="Feltwell T."/>
            <person name="Goble A."/>
            <person name="Hamlin N."/>
            <person name="Hauser H."/>
            <person name="Holroyd S."/>
            <person name="Jagels K."/>
            <person name="Leather S."/>
            <person name="Moule S."/>
            <person name="Norberczak H."/>
            <person name="O'Neil S."/>
            <person name="Ormond D."/>
            <person name="Price C."/>
            <person name="Rabbinowitsch E."/>
            <person name="Rutter S."/>
            <person name="Sanders M."/>
            <person name="Saunders D."/>
            <person name="Seeger K."/>
            <person name="Sharp S."/>
            <person name="Simmonds M."/>
            <person name="Skelton J."/>
            <person name="Squares R."/>
            <person name="Squares S."/>
            <person name="Stevens K."/>
            <person name="Unwin L."/>
            <person name="Whitehead S."/>
            <person name="Barrell B.G."/>
            <person name="Maskell D.J."/>
        </authorList>
    </citation>
    <scope>NUCLEOTIDE SEQUENCE [LARGE SCALE GENOMIC DNA]</scope>
    <source>
        <strain>12822 / ATCC BAA-587 / NCTC 13253</strain>
    </source>
</reference>
<proteinExistence type="inferred from homology"/>
<accession>Q7WCE3</accession>
<feature type="chain" id="PRO_0000177641" description="Peptide chain release factor 1">
    <location>
        <begin position="1"/>
        <end position="360"/>
    </location>
</feature>
<feature type="modified residue" description="N5-methylglutamine" evidence="1">
    <location>
        <position position="235"/>
    </location>
</feature>
<protein>
    <recommendedName>
        <fullName evidence="1">Peptide chain release factor 1</fullName>
        <shortName evidence="1">RF-1</shortName>
    </recommendedName>
</protein>
<gene>
    <name evidence="1" type="primary">prfA</name>
    <name type="ordered locus">BPP0382</name>
</gene>